<proteinExistence type="inferred from homology"/>
<sequence>MSKIAIFPGSFDPFTKGHEDIVRRSLPLFDKVIIAIGNNAQKNRYFEIDYIIPKIESCFEKTDNVEVKVFKGLTAEFAKESGAQFLIRGLRNTTDFEYENSISQANKYLWKDLETVFMITSPHLAYISSSLIRDIHKYDGDVSGFLPYKI</sequence>
<organism>
    <name type="scientific">Cytophaga hutchinsonii (strain ATCC 33406 / DSM 1761 / CIP 103989 / NBRC 15051 / NCIMB 9469 / D465)</name>
    <dbReference type="NCBI Taxonomy" id="269798"/>
    <lineage>
        <taxon>Bacteria</taxon>
        <taxon>Pseudomonadati</taxon>
        <taxon>Bacteroidota</taxon>
        <taxon>Cytophagia</taxon>
        <taxon>Cytophagales</taxon>
        <taxon>Cytophagaceae</taxon>
        <taxon>Cytophaga</taxon>
    </lineage>
</organism>
<accession>Q11RP5</accession>
<evidence type="ECO:0000255" key="1">
    <source>
        <dbReference type="HAMAP-Rule" id="MF_00151"/>
    </source>
</evidence>
<comment type="function">
    <text evidence="1">Reversibly transfers an adenylyl group from ATP to 4'-phosphopantetheine, yielding dephospho-CoA (dPCoA) and pyrophosphate.</text>
</comment>
<comment type="catalytic activity">
    <reaction evidence="1">
        <text>(R)-4'-phosphopantetheine + ATP + H(+) = 3'-dephospho-CoA + diphosphate</text>
        <dbReference type="Rhea" id="RHEA:19801"/>
        <dbReference type="ChEBI" id="CHEBI:15378"/>
        <dbReference type="ChEBI" id="CHEBI:30616"/>
        <dbReference type="ChEBI" id="CHEBI:33019"/>
        <dbReference type="ChEBI" id="CHEBI:57328"/>
        <dbReference type="ChEBI" id="CHEBI:61723"/>
        <dbReference type="EC" id="2.7.7.3"/>
    </reaction>
</comment>
<comment type="cofactor">
    <cofactor evidence="1">
        <name>Mg(2+)</name>
        <dbReference type="ChEBI" id="CHEBI:18420"/>
    </cofactor>
</comment>
<comment type="pathway">
    <text evidence="1">Cofactor biosynthesis; coenzyme A biosynthesis; CoA from (R)-pantothenate: step 4/5.</text>
</comment>
<comment type="subunit">
    <text evidence="1">Homohexamer.</text>
</comment>
<comment type="subcellular location">
    <subcellularLocation>
        <location evidence="1">Cytoplasm</location>
    </subcellularLocation>
</comment>
<comment type="similarity">
    <text evidence="1">Belongs to the bacterial CoaD family.</text>
</comment>
<keyword id="KW-0067">ATP-binding</keyword>
<keyword id="KW-0173">Coenzyme A biosynthesis</keyword>
<keyword id="KW-0963">Cytoplasm</keyword>
<keyword id="KW-0460">Magnesium</keyword>
<keyword id="KW-0547">Nucleotide-binding</keyword>
<keyword id="KW-0548">Nucleotidyltransferase</keyword>
<keyword id="KW-1185">Reference proteome</keyword>
<keyword id="KW-0808">Transferase</keyword>
<gene>
    <name evidence="1" type="primary">coaD</name>
    <name type="ordered locus">CHU_2667</name>
</gene>
<protein>
    <recommendedName>
        <fullName evidence="1">Phosphopantetheine adenylyltransferase</fullName>
        <ecNumber evidence="1">2.7.7.3</ecNumber>
    </recommendedName>
    <alternativeName>
        <fullName evidence="1">Dephospho-CoA pyrophosphorylase</fullName>
    </alternativeName>
    <alternativeName>
        <fullName evidence="1">Pantetheine-phosphate adenylyltransferase</fullName>
        <shortName evidence="1">PPAT</shortName>
    </alternativeName>
</protein>
<reference key="1">
    <citation type="journal article" date="2007" name="Appl. Environ. Microbiol.">
        <title>Genome sequence of the cellulolytic gliding bacterium Cytophaga hutchinsonii.</title>
        <authorList>
            <person name="Xie G."/>
            <person name="Bruce D.C."/>
            <person name="Challacombe J.F."/>
            <person name="Chertkov O."/>
            <person name="Detter J.C."/>
            <person name="Gilna P."/>
            <person name="Han C.S."/>
            <person name="Lucas S."/>
            <person name="Misra M."/>
            <person name="Myers G.L."/>
            <person name="Richardson P."/>
            <person name="Tapia R."/>
            <person name="Thayer N."/>
            <person name="Thompson L.S."/>
            <person name="Brettin T.S."/>
            <person name="Henrissat B."/>
            <person name="Wilson D.B."/>
            <person name="McBride M.J."/>
        </authorList>
    </citation>
    <scope>NUCLEOTIDE SEQUENCE [LARGE SCALE GENOMIC DNA]</scope>
    <source>
        <strain>ATCC 33406 / DSM 1761 / JCM 20678 / CIP 103989 / IAM 12607 / NBRC 15051 / NCIMB 9469 / D465</strain>
    </source>
</reference>
<dbReference type="EC" id="2.7.7.3" evidence="1"/>
<dbReference type="EMBL" id="CP000383">
    <property type="protein sequence ID" value="ABG59919.1"/>
    <property type="molecule type" value="Genomic_DNA"/>
</dbReference>
<dbReference type="RefSeq" id="WP_011586029.1">
    <property type="nucleotide sequence ID" value="NC_008255.1"/>
</dbReference>
<dbReference type="SMR" id="Q11RP5"/>
<dbReference type="STRING" id="269798.CHU_2667"/>
<dbReference type="KEGG" id="chu:CHU_2667"/>
<dbReference type="eggNOG" id="COG0669">
    <property type="taxonomic scope" value="Bacteria"/>
</dbReference>
<dbReference type="HOGENOM" id="CLU_100149_1_1_10"/>
<dbReference type="OrthoDB" id="9806661at2"/>
<dbReference type="UniPathway" id="UPA00241">
    <property type="reaction ID" value="UER00355"/>
</dbReference>
<dbReference type="Proteomes" id="UP000001822">
    <property type="component" value="Chromosome"/>
</dbReference>
<dbReference type="GO" id="GO:0005737">
    <property type="term" value="C:cytoplasm"/>
    <property type="evidence" value="ECO:0007669"/>
    <property type="project" value="UniProtKB-SubCell"/>
</dbReference>
<dbReference type="GO" id="GO:0005524">
    <property type="term" value="F:ATP binding"/>
    <property type="evidence" value="ECO:0007669"/>
    <property type="project" value="UniProtKB-KW"/>
</dbReference>
<dbReference type="GO" id="GO:0004595">
    <property type="term" value="F:pantetheine-phosphate adenylyltransferase activity"/>
    <property type="evidence" value="ECO:0007669"/>
    <property type="project" value="UniProtKB-UniRule"/>
</dbReference>
<dbReference type="GO" id="GO:0015937">
    <property type="term" value="P:coenzyme A biosynthetic process"/>
    <property type="evidence" value="ECO:0007669"/>
    <property type="project" value="UniProtKB-UniRule"/>
</dbReference>
<dbReference type="CDD" id="cd02163">
    <property type="entry name" value="PPAT"/>
    <property type="match status" value="1"/>
</dbReference>
<dbReference type="Gene3D" id="3.40.50.620">
    <property type="entry name" value="HUPs"/>
    <property type="match status" value="1"/>
</dbReference>
<dbReference type="HAMAP" id="MF_00151">
    <property type="entry name" value="PPAT_bact"/>
    <property type="match status" value="1"/>
</dbReference>
<dbReference type="InterPro" id="IPR004821">
    <property type="entry name" value="Cyt_trans-like"/>
</dbReference>
<dbReference type="InterPro" id="IPR001980">
    <property type="entry name" value="PPAT"/>
</dbReference>
<dbReference type="InterPro" id="IPR014729">
    <property type="entry name" value="Rossmann-like_a/b/a_fold"/>
</dbReference>
<dbReference type="NCBIfam" id="TIGR01510">
    <property type="entry name" value="coaD_prev_kdtB"/>
    <property type="match status" value="1"/>
</dbReference>
<dbReference type="NCBIfam" id="TIGR00125">
    <property type="entry name" value="cyt_tran_rel"/>
    <property type="match status" value="1"/>
</dbReference>
<dbReference type="PANTHER" id="PTHR21342">
    <property type="entry name" value="PHOSPHOPANTETHEINE ADENYLYLTRANSFERASE"/>
    <property type="match status" value="1"/>
</dbReference>
<dbReference type="PANTHER" id="PTHR21342:SF1">
    <property type="entry name" value="PHOSPHOPANTETHEINE ADENYLYLTRANSFERASE"/>
    <property type="match status" value="1"/>
</dbReference>
<dbReference type="Pfam" id="PF01467">
    <property type="entry name" value="CTP_transf_like"/>
    <property type="match status" value="1"/>
</dbReference>
<dbReference type="PRINTS" id="PR01020">
    <property type="entry name" value="LPSBIOSNTHSS"/>
</dbReference>
<dbReference type="SUPFAM" id="SSF52374">
    <property type="entry name" value="Nucleotidylyl transferase"/>
    <property type="match status" value="1"/>
</dbReference>
<name>COAD_CYTH3</name>
<feature type="chain" id="PRO_1000058160" description="Phosphopantetheine adenylyltransferase">
    <location>
        <begin position="1"/>
        <end position="150"/>
    </location>
</feature>
<feature type="binding site" evidence="1">
    <location>
        <begin position="10"/>
        <end position="11"/>
    </location>
    <ligand>
        <name>ATP</name>
        <dbReference type="ChEBI" id="CHEBI:30616"/>
    </ligand>
</feature>
<feature type="binding site" evidence="1">
    <location>
        <position position="10"/>
    </location>
    <ligand>
        <name>substrate</name>
    </ligand>
</feature>
<feature type="binding site" evidence="1">
    <location>
        <position position="18"/>
    </location>
    <ligand>
        <name>ATP</name>
        <dbReference type="ChEBI" id="CHEBI:30616"/>
    </ligand>
</feature>
<feature type="binding site" evidence="1">
    <location>
        <position position="42"/>
    </location>
    <ligand>
        <name>substrate</name>
    </ligand>
</feature>
<feature type="binding site" evidence="1">
    <location>
        <position position="74"/>
    </location>
    <ligand>
        <name>substrate</name>
    </ligand>
</feature>
<feature type="binding site" evidence="1">
    <location>
        <position position="88"/>
    </location>
    <ligand>
        <name>substrate</name>
    </ligand>
</feature>
<feature type="binding site" evidence="1">
    <location>
        <begin position="89"/>
        <end position="91"/>
    </location>
    <ligand>
        <name>ATP</name>
        <dbReference type="ChEBI" id="CHEBI:30616"/>
    </ligand>
</feature>
<feature type="binding site" evidence="1">
    <location>
        <position position="99"/>
    </location>
    <ligand>
        <name>ATP</name>
        <dbReference type="ChEBI" id="CHEBI:30616"/>
    </ligand>
</feature>
<feature type="binding site" evidence="1">
    <location>
        <begin position="124"/>
        <end position="130"/>
    </location>
    <ligand>
        <name>ATP</name>
        <dbReference type="ChEBI" id="CHEBI:30616"/>
    </ligand>
</feature>
<feature type="site" description="Transition state stabilizer" evidence="1">
    <location>
        <position position="18"/>
    </location>
</feature>